<name>NAGC_ECO57</name>
<protein>
    <recommendedName>
        <fullName>N-acetylglucosamine repressor</fullName>
    </recommendedName>
</protein>
<feature type="chain" id="PRO_0000095692" description="N-acetylglucosamine repressor">
    <location>
        <begin position="1"/>
        <end position="406"/>
    </location>
</feature>
<feature type="DNA-binding region" description="H-T-H motif" evidence="1">
    <location>
        <begin position="35"/>
        <end position="44"/>
    </location>
</feature>
<proteinExistence type="inferred from homology"/>
<sequence>MTPGGQAQIGNVDLVKQLNSAAVYRLIDQYGPISRIQIAEQSQLAPASVTKITRQLIERGLIKEVDQQASTGGRRAISIVTETRNFHAIGVRLGRHDATITLFDLSSKVLAEEHYPLPERTQQTLEHALLNAIAQFIDSYQRKLRELIAISVILPGLVDPDSGKIHYMPHIQVENWGLVEALEERFKVTCFVGHDIRSLALAEHYFGASQDCEDSILVRVHRGTGAGIISNGRIFIGRNGNVGEIGHIQVEPLGERCHCGNFGCLETIAANAAIEQRVLNLLKQGYQSRVPLDDCTIKTICKAANKGDSLASEVIEYVGRHLGKTIAIAINLFNPQKIVIAGEITEADKVLLPAIESCINTQALKAFRTNLPVVRSELDHRSAIGAFALVKRAMLNGILLQHLLEN</sequence>
<reference key="1">
    <citation type="journal article" date="2001" name="Nature">
        <title>Genome sequence of enterohaemorrhagic Escherichia coli O157:H7.</title>
        <authorList>
            <person name="Perna N.T."/>
            <person name="Plunkett G. III"/>
            <person name="Burland V."/>
            <person name="Mau B."/>
            <person name="Glasner J.D."/>
            <person name="Rose D.J."/>
            <person name="Mayhew G.F."/>
            <person name="Evans P.S."/>
            <person name="Gregor J."/>
            <person name="Kirkpatrick H.A."/>
            <person name="Posfai G."/>
            <person name="Hackett J."/>
            <person name="Klink S."/>
            <person name="Boutin A."/>
            <person name="Shao Y."/>
            <person name="Miller L."/>
            <person name="Grotbeck E.J."/>
            <person name="Davis N.W."/>
            <person name="Lim A."/>
            <person name="Dimalanta E.T."/>
            <person name="Potamousis K."/>
            <person name="Apodaca J."/>
            <person name="Anantharaman T.S."/>
            <person name="Lin J."/>
            <person name="Yen G."/>
            <person name="Schwartz D.C."/>
            <person name="Welch R.A."/>
            <person name="Blattner F.R."/>
        </authorList>
    </citation>
    <scope>NUCLEOTIDE SEQUENCE [LARGE SCALE GENOMIC DNA]</scope>
    <source>
        <strain>O157:H7 / EDL933 / ATCC 700927 / EHEC</strain>
    </source>
</reference>
<reference key="2">
    <citation type="journal article" date="2001" name="DNA Res.">
        <title>Complete genome sequence of enterohemorrhagic Escherichia coli O157:H7 and genomic comparison with a laboratory strain K-12.</title>
        <authorList>
            <person name="Hayashi T."/>
            <person name="Makino K."/>
            <person name="Ohnishi M."/>
            <person name="Kurokawa K."/>
            <person name="Ishii K."/>
            <person name="Yokoyama K."/>
            <person name="Han C.-G."/>
            <person name="Ohtsubo E."/>
            <person name="Nakayama K."/>
            <person name="Murata T."/>
            <person name="Tanaka M."/>
            <person name="Tobe T."/>
            <person name="Iida T."/>
            <person name="Takami H."/>
            <person name="Honda T."/>
            <person name="Sasakawa C."/>
            <person name="Ogasawara N."/>
            <person name="Yasunaga T."/>
            <person name="Kuhara S."/>
            <person name="Shiba T."/>
            <person name="Hattori M."/>
            <person name="Shinagawa H."/>
        </authorList>
    </citation>
    <scope>NUCLEOTIDE SEQUENCE [LARGE SCALE GENOMIC DNA]</scope>
    <source>
        <strain>O157:H7 / Sakai / RIMD 0509952 / EHEC</strain>
    </source>
</reference>
<comment type="function">
    <text evidence="1">Acts as a repressor of the nagEBACD operon and acts both as an activator and a repressor for the transcription of the glmSU operon.</text>
</comment>
<comment type="similarity">
    <text evidence="2">Belongs to the ROK (NagC/XylR) family.</text>
</comment>
<dbReference type="EMBL" id="AE005174">
    <property type="protein sequence ID" value="AAG54998.1"/>
    <property type="molecule type" value="Genomic_DNA"/>
</dbReference>
<dbReference type="EMBL" id="BA000007">
    <property type="protein sequence ID" value="BAB34129.1"/>
    <property type="molecule type" value="Genomic_DNA"/>
</dbReference>
<dbReference type="PIR" id="B85567">
    <property type="entry name" value="B85567"/>
</dbReference>
<dbReference type="PIR" id="B90717">
    <property type="entry name" value="B90717"/>
</dbReference>
<dbReference type="RefSeq" id="NP_308733.1">
    <property type="nucleotide sequence ID" value="NC_002695.1"/>
</dbReference>
<dbReference type="RefSeq" id="WP_000187594.1">
    <property type="nucleotide sequence ID" value="NZ_VOAI01000012.1"/>
</dbReference>
<dbReference type="SMR" id="P0AF22"/>
<dbReference type="STRING" id="155864.Z0823"/>
<dbReference type="GeneID" id="917075"/>
<dbReference type="GeneID" id="93776809"/>
<dbReference type="KEGG" id="ece:Z0823"/>
<dbReference type="KEGG" id="ecs:ECs_0706"/>
<dbReference type="PATRIC" id="fig|386585.9.peg.818"/>
<dbReference type="eggNOG" id="COG1846">
    <property type="taxonomic scope" value="Bacteria"/>
</dbReference>
<dbReference type="eggNOG" id="COG1940">
    <property type="taxonomic scope" value="Bacteria"/>
</dbReference>
<dbReference type="HOGENOM" id="CLU_036604_13_1_6"/>
<dbReference type="OMA" id="GVANLCN"/>
<dbReference type="Proteomes" id="UP000000558">
    <property type="component" value="Chromosome"/>
</dbReference>
<dbReference type="Proteomes" id="UP000002519">
    <property type="component" value="Chromosome"/>
</dbReference>
<dbReference type="GO" id="GO:0003677">
    <property type="term" value="F:DNA binding"/>
    <property type="evidence" value="ECO:0007669"/>
    <property type="project" value="UniProtKB-KW"/>
</dbReference>
<dbReference type="GO" id="GO:0003700">
    <property type="term" value="F:DNA-binding transcription factor activity"/>
    <property type="evidence" value="ECO:0007669"/>
    <property type="project" value="InterPro"/>
</dbReference>
<dbReference type="CDD" id="cd24075">
    <property type="entry name" value="ASKHA_ATPase_ROK_NagC"/>
    <property type="match status" value="1"/>
</dbReference>
<dbReference type="FunFam" id="3.30.420.40:FF:000059">
    <property type="entry name" value="N-acetylglucosamine operon transcriptional repressor"/>
    <property type="match status" value="1"/>
</dbReference>
<dbReference type="FunFam" id="3.30.420.40:FF:000065">
    <property type="entry name" value="N-acetylglucosamine repressor NagC"/>
    <property type="match status" value="1"/>
</dbReference>
<dbReference type="FunFam" id="1.10.10.10:FF:000045">
    <property type="entry name" value="ROK family transcriptional regulator"/>
    <property type="match status" value="1"/>
</dbReference>
<dbReference type="Gene3D" id="3.30.420.40">
    <property type="match status" value="2"/>
</dbReference>
<dbReference type="Gene3D" id="1.10.10.10">
    <property type="entry name" value="Winged helix-like DNA-binding domain superfamily/Winged helix DNA-binding domain"/>
    <property type="match status" value="1"/>
</dbReference>
<dbReference type="InterPro" id="IPR043129">
    <property type="entry name" value="ATPase_NBD"/>
</dbReference>
<dbReference type="InterPro" id="IPR000835">
    <property type="entry name" value="HTH_MarR-typ"/>
</dbReference>
<dbReference type="InterPro" id="IPR000600">
    <property type="entry name" value="ROK"/>
</dbReference>
<dbReference type="InterPro" id="IPR049874">
    <property type="entry name" value="ROK_cs"/>
</dbReference>
<dbReference type="InterPro" id="IPR036388">
    <property type="entry name" value="WH-like_DNA-bd_sf"/>
</dbReference>
<dbReference type="InterPro" id="IPR036390">
    <property type="entry name" value="WH_DNA-bd_sf"/>
</dbReference>
<dbReference type="PANTHER" id="PTHR18964:SF175">
    <property type="entry name" value="N-ACETYLGLUCOSAMINE REPRESSOR"/>
    <property type="match status" value="1"/>
</dbReference>
<dbReference type="PANTHER" id="PTHR18964">
    <property type="entry name" value="ROK (REPRESSOR, ORF, KINASE) FAMILY"/>
    <property type="match status" value="1"/>
</dbReference>
<dbReference type="Pfam" id="PF01047">
    <property type="entry name" value="MarR"/>
    <property type="match status" value="1"/>
</dbReference>
<dbReference type="Pfam" id="PF00480">
    <property type="entry name" value="ROK"/>
    <property type="match status" value="1"/>
</dbReference>
<dbReference type="SUPFAM" id="SSF53067">
    <property type="entry name" value="Actin-like ATPase domain"/>
    <property type="match status" value="1"/>
</dbReference>
<dbReference type="SUPFAM" id="SSF46785">
    <property type="entry name" value="Winged helix' DNA-binding domain"/>
    <property type="match status" value="1"/>
</dbReference>
<dbReference type="PROSITE" id="PS01125">
    <property type="entry name" value="ROK"/>
    <property type="match status" value="1"/>
</dbReference>
<gene>
    <name type="primary">nagC</name>
    <name type="ordered locus">Z0823</name>
    <name type="ordered locus">ECs0706</name>
</gene>
<accession>P0AF22</accession>
<accession>P15301</accession>
<evidence type="ECO:0000250" key="1"/>
<evidence type="ECO:0000305" key="2"/>
<keyword id="KW-0010">Activator</keyword>
<keyword id="KW-0119">Carbohydrate metabolism</keyword>
<keyword id="KW-0238">DNA-binding</keyword>
<keyword id="KW-1185">Reference proteome</keyword>
<keyword id="KW-0678">Repressor</keyword>
<keyword id="KW-0804">Transcription</keyword>
<keyword id="KW-0805">Transcription regulation</keyword>
<organism>
    <name type="scientific">Escherichia coli O157:H7</name>
    <dbReference type="NCBI Taxonomy" id="83334"/>
    <lineage>
        <taxon>Bacteria</taxon>
        <taxon>Pseudomonadati</taxon>
        <taxon>Pseudomonadota</taxon>
        <taxon>Gammaproteobacteria</taxon>
        <taxon>Enterobacterales</taxon>
        <taxon>Enterobacteriaceae</taxon>
        <taxon>Escherichia</taxon>
    </lineage>
</organism>